<comment type="function">
    <text evidence="1">Catalyzes the conversion of dethiobiotin (DTB) to biotin by the insertion of a sulfur atom into dethiobiotin via a radical-based mechanism.</text>
</comment>
<comment type="catalytic activity">
    <reaction evidence="1">
        <text>(4R,5S)-dethiobiotin + (sulfur carrier)-SH + 2 reduced [2Fe-2S]-[ferredoxin] + 2 S-adenosyl-L-methionine = (sulfur carrier)-H + biotin + 2 5'-deoxyadenosine + 2 L-methionine + 2 oxidized [2Fe-2S]-[ferredoxin]</text>
        <dbReference type="Rhea" id="RHEA:22060"/>
        <dbReference type="Rhea" id="RHEA-COMP:10000"/>
        <dbReference type="Rhea" id="RHEA-COMP:10001"/>
        <dbReference type="Rhea" id="RHEA-COMP:14737"/>
        <dbReference type="Rhea" id="RHEA-COMP:14739"/>
        <dbReference type="ChEBI" id="CHEBI:17319"/>
        <dbReference type="ChEBI" id="CHEBI:29917"/>
        <dbReference type="ChEBI" id="CHEBI:33737"/>
        <dbReference type="ChEBI" id="CHEBI:33738"/>
        <dbReference type="ChEBI" id="CHEBI:57586"/>
        <dbReference type="ChEBI" id="CHEBI:57844"/>
        <dbReference type="ChEBI" id="CHEBI:59789"/>
        <dbReference type="ChEBI" id="CHEBI:64428"/>
        <dbReference type="ChEBI" id="CHEBI:149473"/>
        <dbReference type="EC" id="2.8.1.6"/>
    </reaction>
</comment>
<comment type="cofactor">
    <cofactor evidence="1">
        <name>[4Fe-4S] cluster</name>
        <dbReference type="ChEBI" id="CHEBI:49883"/>
    </cofactor>
    <text evidence="1">Binds 1 [4Fe-4S] cluster. The cluster is coordinated with 3 cysteines and an exchangeable S-adenosyl-L-methionine.</text>
</comment>
<comment type="cofactor">
    <cofactor evidence="1">
        <name>[2Fe-2S] cluster</name>
        <dbReference type="ChEBI" id="CHEBI:190135"/>
    </cofactor>
    <text evidence="1">Binds 1 [2Fe-2S] cluster. The cluster is coordinated with 3 cysteines and 1 arginine.</text>
</comment>
<comment type="pathway">
    <text evidence="1">Cofactor biosynthesis; biotin biosynthesis; biotin from 7,8-diaminononanoate: step 2/2.</text>
</comment>
<comment type="subunit">
    <text evidence="1">Homodimer.</text>
</comment>
<comment type="similarity">
    <text evidence="1">Belongs to the radical SAM superfamily. Biotin synthase family.</text>
</comment>
<protein>
    <recommendedName>
        <fullName evidence="1">Biotin synthase</fullName>
        <ecNumber evidence="1">2.8.1.6</ecNumber>
    </recommendedName>
</protein>
<proteinExistence type="inferred from homology"/>
<evidence type="ECO:0000255" key="1">
    <source>
        <dbReference type="HAMAP-Rule" id="MF_01694"/>
    </source>
</evidence>
<evidence type="ECO:0000255" key="2">
    <source>
        <dbReference type="PROSITE-ProRule" id="PRU01266"/>
    </source>
</evidence>
<dbReference type="EC" id="2.8.1.6" evidence="1"/>
<dbReference type="EMBL" id="CP001124">
    <property type="protein sequence ID" value="ACH39066.1"/>
    <property type="molecule type" value="Genomic_DNA"/>
</dbReference>
<dbReference type="RefSeq" id="WP_012530487.1">
    <property type="nucleotide sequence ID" value="NC_011146.1"/>
</dbReference>
<dbReference type="SMR" id="B5ECN1"/>
<dbReference type="STRING" id="404380.Gbem_2053"/>
<dbReference type="KEGG" id="gbm:Gbem_2053"/>
<dbReference type="eggNOG" id="COG0502">
    <property type="taxonomic scope" value="Bacteria"/>
</dbReference>
<dbReference type="HOGENOM" id="CLU_033172_2_1_7"/>
<dbReference type="OrthoDB" id="9786826at2"/>
<dbReference type="UniPathway" id="UPA00078">
    <property type="reaction ID" value="UER00162"/>
</dbReference>
<dbReference type="Proteomes" id="UP000008825">
    <property type="component" value="Chromosome"/>
</dbReference>
<dbReference type="GO" id="GO:0051537">
    <property type="term" value="F:2 iron, 2 sulfur cluster binding"/>
    <property type="evidence" value="ECO:0007669"/>
    <property type="project" value="UniProtKB-KW"/>
</dbReference>
<dbReference type="GO" id="GO:0051539">
    <property type="term" value="F:4 iron, 4 sulfur cluster binding"/>
    <property type="evidence" value="ECO:0007669"/>
    <property type="project" value="UniProtKB-KW"/>
</dbReference>
<dbReference type="GO" id="GO:0004076">
    <property type="term" value="F:biotin synthase activity"/>
    <property type="evidence" value="ECO:0007669"/>
    <property type="project" value="UniProtKB-UniRule"/>
</dbReference>
<dbReference type="GO" id="GO:0005506">
    <property type="term" value="F:iron ion binding"/>
    <property type="evidence" value="ECO:0007669"/>
    <property type="project" value="UniProtKB-UniRule"/>
</dbReference>
<dbReference type="GO" id="GO:0009102">
    <property type="term" value="P:biotin biosynthetic process"/>
    <property type="evidence" value="ECO:0007669"/>
    <property type="project" value="UniProtKB-UniRule"/>
</dbReference>
<dbReference type="CDD" id="cd01335">
    <property type="entry name" value="Radical_SAM"/>
    <property type="match status" value="1"/>
</dbReference>
<dbReference type="FunFam" id="3.20.20.70:FF:000026">
    <property type="entry name" value="Biotin synthase"/>
    <property type="match status" value="1"/>
</dbReference>
<dbReference type="Gene3D" id="3.20.20.70">
    <property type="entry name" value="Aldolase class I"/>
    <property type="match status" value="1"/>
</dbReference>
<dbReference type="HAMAP" id="MF_01694">
    <property type="entry name" value="BioB"/>
    <property type="match status" value="1"/>
</dbReference>
<dbReference type="InterPro" id="IPR013785">
    <property type="entry name" value="Aldolase_TIM"/>
</dbReference>
<dbReference type="InterPro" id="IPR010722">
    <property type="entry name" value="BATS_dom"/>
</dbReference>
<dbReference type="InterPro" id="IPR002684">
    <property type="entry name" value="Biotin_synth/BioAB"/>
</dbReference>
<dbReference type="InterPro" id="IPR024177">
    <property type="entry name" value="Biotin_synthase"/>
</dbReference>
<dbReference type="InterPro" id="IPR006638">
    <property type="entry name" value="Elp3/MiaA/NifB-like_rSAM"/>
</dbReference>
<dbReference type="InterPro" id="IPR007197">
    <property type="entry name" value="rSAM"/>
</dbReference>
<dbReference type="NCBIfam" id="TIGR00433">
    <property type="entry name" value="bioB"/>
    <property type="match status" value="1"/>
</dbReference>
<dbReference type="PANTHER" id="PTHR22976">
    <property type="entry name" value="BIOTIN SYNTHASE"/>
    <property type="match status" value="1"/>
</dbReference>
<dbReference type="PANTHER" id="PTHR22976:SF2">
    <property type="entry name" value="BIOTIN SYNTHASE, MITOCHONDRIAL"/>
    <property type="match status" value="1"/>
</dbReference>
<dbReference type="Pfam" id="PF06968">
    <property type="entry name" value="BATS"/>
    <property type="match status" value="1"/>
</dbReference>
<dbReference type="Pfam" id="PF04055">
    <property type="entry name" value="Radical_SAM"/>
    <property type="match status" value="1"/>
</dbReference>
<dbReference type="PIRSF" id="PIRSF001619">
    <property type="entry name" value="Biotin_synth"/>
    <property type="match status" value="1"/>
</dbReference>
<dbReference type="SFLD" id="SFLDG01278">
    <property type="entry name" value="biotin_synthase_like"/>
    <property type="match status" value="1"/>
</dbReference>
<dbReference type="SFLD" id="SFLDS00029">
    <property type="entry name" value="Radical_SAM"/>
    <property type="match status" value="1"/>
</dbReference>
<dbReference type="SMART" id="SM00876">
    <property type="entry name" value="BATS"/>
    <property type="match status" value="1"/>
</dbReference>
<dbReference type="SMART" id="SM00729">
    <property type="entry name" value="Elp3"/>
    <property type="match status" value="1"/>
</dbReference>
<dbReference type="SUPFAM" id="SSF102114">
    <property type="entry name" value="Radical SAM enzymes"/>
    <property type="match status" value="1"/>
</dbReference>
<dbReference type="PROSITE" id="PS51918">
    <property type="entry name" value="RADICAL_SAM"/>
    <property type="match status" value="1"/>
</dbReference>
<keyword id="KW-0001">2Fe-2S</keyword>
<keyword id="KW-0004">4Fe-4S</keyword>
<keyword id="KW-0093">Biotin biosynthesis</keyword>
<keyword id="KW-0408">Iron</keyword>
<keyword id="KW-0411">Iron-sulfur</keyword>
<keyword id="KW-0479">Metal-binding</keyword>
<keyword id="KW-1185">Reference proteome</keyword>
<keyword id="KW-0949">S-adenosyl-L-methionine</keyword>
<keyword id="KW-0808">Transferase</keyword>
<sequence>MEKMINDIAHRIIAGGSITEAEAIQLTQVQGTEVYDLFRAATRVKEHFVGNEVHLCSIINAKSGRCAENCAFCAQSAHHKTDAPVYPLVQEEEMLASARMAETNGSACFGIITSGTTVNGPELEQILTALRRIRKETTILPSCSLGIIDEETARKLKEAGMDTYHHNLETAASFFPQICTTHDYQDDVNTVRAVKKAGVKVCCGGIFGLGESAAQRVEMALTLKDLDVDSVPMNFLNPIEGTRLEGAANITAQECLKTIAIYRLILPGKRITVCGGREKNLRDLQSWIFFAGANGTMIGNYLTTLGRNVDTDLTMFSDLGLKTVMCAH</sequence>
<organism>
    <name type="scientific">Citrifermentans bemidjiense (strain ATCC BAA-1014 / DSM 16622 / JCM 12645 / Bem)</name>
    <name type="common">Geobacter bemidjiensis</name>
    <dbReference type="NCBI Taxonomy" id="404380"/>
    <lineage>
        <taxon>Bacteria</taxon>
        <taxon>Pseudomonadati</taxon>
        <taxon>Thermodesulfobacteriota</taxon>
        <taxon>Desulfuromonadia</taxon>
        <taxon>Geobacterales</taxon>
        <taxon>Geobacteraceae</taxon>
        <taxon>Citrifermentans</taxon>
    </lineage>
</organism>
<accession>B5ECN1</accession>
<name>BIOB_CITBB</name>
<gene>
    <name evidence="1" type="primary">bioB</name>
    <name type="ordered locus">Gbem_2053</name>
</gene>
<reference key="1">
    <citation type="submission" date="2008-07" db="EMBL/GenBank/DDBJ databases">
        <title>Complete sequence of Geobacter bemidjiensis BEM.</title>
        <authorList>
            <consortium name="US DOE Joint Genome Institute"/>
            <person name="Lucas S."/>
            <person name="Copeland A."/>
            <person name="Lapidus A."/>
            <person name="Glavina del Rio T."/>
            <person name="Dalin E."/>
            <person name="Tice H."/>
            <person name="Bruce D."/>
            <person name="Goodwin L."/>
            <person name="Pitluck S."/>
            <person name="Kiss H."/>
            <person name="Brettin T."/>
            <person name="Detter J.C."/>
            <person name="Han C."/>
            <person name="Kuske C.R."/>
            <person name="Schmutz J."/>
            <person name="Larimer F."/>
            <person name="Land M."/>
            <person name="Hauser L."/>
            <person name="Kyrpides N."/>
            <person name="Lykidis A."/>
            <person name="Lovley D."/>
            <person name="Richardson P."/>
        </authorList>
    </citation>
    <scope>NUCLEOTIDE SEQUENCE [LARGE SCALE GENOMIC DNA]</scope>
    <source>
        <strain>ATCC BAA-1014 / DSM 16622 / JCM 12645 / Bem</strain>
    </source>
</reference>
<feature type="chain" id="PRO_0000381400" description="Biotin synthase">
    <location>
        <begin position="1"/>
        <end position="328"/>
    </location>
</feature>
<feature type="domain" description="Radical SAM core" evidence="2">
    <location>
        <begin position="48"/>
        <end position="277"/>
    </location>
</feature>
<feature type="binding site" evidence="1">
    <location>
        <position position="66"/>
    </location>
    <ligand>
        <name>[4Fe-4S] cluster</name>
        <dbReference type="ChEBI" id="CHEBI:49883"/>
        <note>4Fe-4S-S-AdoMet</note>
    </ligand>
</feature>
<feature type="binding site" evidence="1">
    <location>
        <position position="70"/>
    </location>
    <ligand>
        <name>[4Fe-4S] cluster</name>
        <dbReference type="ChEBI" id="CHEBI:49883"/>
        <note>4Fe-4S-S-AdoMet</note>
    </ligand>
</feature>
<feature type="binding site" evidence="1">
    <location>
        <position position="73"/>
    </location>
    <ligand>
        <name>[4Fe-4S] cluster</name>
        <dbReference type="ChEBI" id="CHEBI:49883"/>
        <note>4Fe-4S-S-AdoMet</note>
    </ligand>
</feature>
<feature type="binding site" evidence="1">
    <location>
        <position position="142"/>
    </location>
    <ligand>
        <name>[2Fe-2S] cluster</name>
        <dbReference type="ChEBI" id="CHEBI:190135"/>
    </ligand>
</feature>
<feature type="binding site" evidence="1">
    <location>
        <position position="202"/>
    </location>
    <ligand>
        <name>[2Fe-2S] cluster</name>
        <dbReference type="ChEBI" id="CHEBI:190135"/>
    </ligand>
</feature>